<accession>Q8CGN8</accession>
<accession>Q3KNY6</accession>
<evidence type="ECO:0000250" key="1"/>
<evidence type="ECO:0000256" key="2">
    <source>
        <dbReference type="SAM" id="MobiDB-lite"/>
    </source>
</evidence>
<evidence type="ECO:0000305" key="3"/>
<keyword id="KW-0963">Cytoplasm</keyword>
<keyword id="KW-0417">Keratinization</keyword>
<keyword id="KW-1185">Reference proteome</keyword>
<sequence length="76" mass="8504">MPSHQHQNQQQCTPQAQQQQVKQPCQPPPTKCQEACVPKTKDPCVPQAKKQCPARSTTNPAQEKCPAQQDPKCKQK</sequence>
<gene>
    <name type="primary">Sprr4</name>
</gene>
<feature type="chain" id="PRO_0000150007" description="Small proline-rich protein 4">
    <location>
        <begin position="1"/>
        <end position="76"/>
    </location>
</feature>
<feature type="region of interest" description="Disordered" evidence="2">
    <location>
        <begin position="38"/>
        <end position="76"/>
    </location>
</feature>
<protein>
    <recommendedName>
        <fullName>Small proline-rich protein 4</fullName>
    </recommendedName>
</protein>
<dbReference type="EMBL" id="AY158996">
    <property type="protein sequence ID" value="AAN86833.1"/>
    <property type="molecule type" value="mRNA"/>
</dbReference>
<dbReference type="EMBL" id="BC107019">
    <property type="protein sequence ID" value="AAI07020.1"/>
    <property type="molecule type" value="mRNA"/>
</dbReference>
<dbReference type="CCDS" id="CCDS38513.1"/>
<dbReference type="RefSeq" id="NP_775093.1">
    <property type="nucleotide sequence ID" value="NM_173070.1"/>
</dbReference>
<dbReference type="FunCoup" id="Q8CGN8">
    <property type="interactions" value="23"/>
</dbReference>
<dbReference type="STRING" id="10090.ENSMUSP00000051559"/>
<dbReference type="PhosphoSitePlus" id="Q8CGN8"/>
<dbReference type="PaxDb" id="10090-ENSMUSP00000051559"/>
<dbReference type="ProteomicsDB" id="263330"/>
<dbReference type="Antibodypedia" id="56985">
    <property type="antibodies" value="16 antibodies from 8 providers"/>
</dbReference>
<dbReference type="Ensembl" id="ENSMUST00000062129.2">
    <property type="protein sequence ID" value="ENSMUSP00000051559.2"/>
    <property type="gene ID" value="ENSMUSG00000045566.2"/>
</dbReference>
<dbReference type="GeneID" id="229562"/>
<dbReference type="KEGG" id="mmu:229562"/>
<dbReference type="UCSC" id="uc008qee.1">
    <property type="organism name" value="mouse"/>
</dbReference>
<dbReference type="AGR" id="MGI:2654508"/>
<dbReference type="CTD" id="163778"/>
<dbReference type="MGI" id="MGI:2654508">
    <property type="gene designation" value="Sprr4"/>
</dbReference>
<dbReference type="VEuPathDB" id="HostDB:ENSMUSG00000045566"/>
<dbReference type="eggNOG" id="ENOG502TDX8">
    <property type="taxonomic scope" value="Eukaryota"/>
</dbReference>
<dbReference type="GeneTree" id="ENSGT00730000111626"/>
<dbReference type="HOGENOM" id="CLU_2637484_0_0_1"/>
<dbReference type="InParanoid" id="Q8CGN8"/>
<dbReference type="OMA" id="QTKDPCA"/>
<dbReference type="OrthoDB" id="89544at9989"/>
<dbReference type="PhylomeDB" id="Q8CGN8"/>
<dbReference type="BioGRID-ORCS" id="229562">
    <property type="hits" value="1 hit in 74 CRISPR screens"/>
</dbReference>
<dbReference type="PRO" id="PR:Q8CGN8"/>
<dbReference type="Proteomes" id="UP000000589">
    <property type="component" value="Chromosome 3"/>
</dbReference>
<dbReference type="RNAct" id="Q8CGN8">
    <property type="molecule type" value="protein"/>
</dbReference>
<dbReference type="Bgee" id="ENSMUSG00000045566">
    <property type="expression patterns" value="Expressed in lip and 11 other cell types or tissues"/>
</dbReference>
<dbReference type="GO" id="GO:0005938">
    <property type="term" value="C:cell cortex"/>
    <property type="evidence" value="ECO:0007669"/>
    <property type="project" value="UniProtKB-SubCell"/>
</dbReference>
<dbReference type="GO" id="GO:0031424">
    <property type="term" value="P:keratinization"/>
    <property type="evidence" value="ECO:0007669"/>
    <property type="project" value="UniProtKB-KW"/>
</dbReference>
<dbReference type="PRINTS" id="PR00021">
    <property type="entry name" value="PRORICH"/>
</dbReference>
<name>SPRR4_MOUSE</name>
<comment type="function">
    <text evidence="1">Cross-linked envelope protein of keratinocytes. Involved in UV-induced cornification (By similarity).</text>
</comment>
<comment type="subcellular location">
    <subcellularLocation>
        <location evidence="1">Cytoplasm</location>
    </subcellularLocation>
    <subcellularLocation>
        <location evidence="1">Cytoplasm</location>
        <location evidence="1">Cell cortex</location>
    </subcellularLocation>
    <text evidence="1">Translocates to the cell periphery of keratinocytes and is integrated into both rigid and fragile cornified envelopes.</text>
</comment>
<comment type="PTM">
    <text evidence="3">Cross-linked to membrane proteins by transglutaminase.</text>
</comment>
<comment type="similarity">
    <text evidence="3">Belongs to the cornifin (SPRR) family.</text>
</comment>
<organism>
    <name type="scientific">Mus musculus</name>
    <name type="common">Mouse</name>
    <dbReference type="NCBI Taxonomy" id="10090"/>
    <lineage>
        <taxon>Eukaryota</taxon>
        <taxon>Metazoa</taxon>
        <taxon>Chordata</taxon>
        <taxon>Craniata</taxon>
        <taxon>Vertebrata</taxon>
        <taxon>Euteleostomi</taxon>
        <taxon>Mammalia</taxon>
        <taxon>Eutheria</taxon>
        <taxon>Euarchontoglires</taxon>
        <taxon>Glires</taxon>
        <taxon>Rodentia</taxon>
        <taxon>Myomorpha</taxon>
        <taxon>Muroidea</taxon>
        <taxon>Muridae</taxon>
        <taxon>Murinae</taxon>
        <taxon>Mus</taxon>
        <taxon>Mus</taxon>
    </lineage>
</organism>
<proteinExistence type="inferred from homology"/>
<reference key="1">
    <citation type="journal article" date="2003" name="Mamm. Genome">
        <title>Mouse Sprr locus: a tandem array of coordinately regulated genes.</title>
        <authorList>
            <person name="Patel S."/>
            <person name="Kartasova T."/>
            <person name="Segre J.A."/>
        </authorList>
    </citation>
    <scope>NUCLEOTIDE SEQUENCE [MRNA]</scope>
    <source>
        <strain>C57BL/6J</strain>
    </source>
</reference>
<reference key="2">
    <citation type="journal article" date="2004" name="Genome Res.">
        <title>The status, quality, and expansion of the NIH full-length cDNA project: the Mammalian Gene Collection (MGC).</title>
        <authorList>
            <consortium name="The MGC Project Team"/>
        </authorList>
    </citation>
    <scope>NUCLEOTIDE SEQUENCE [LARGE SCALE MRNA]</scope>
</reference>